<name>RF3_LACJO</name>
<evidence type="ECO:0000255" key="1">
    <source>
        <dbReference type="HAMAP-Rule" id="MF_00072"/>
    </source>
</evidence>
<reference key="1">
    <citation type="journal article" date="2004" name="Proc. Natl. Acad. Sci. U.S.A.">
        <title>The genome sequence of the probiotic intestinal bacterium Lactobacillus johnsonii NCC 533.</title>
        <authorList>
            <person name="Pridmore R.D."/>
            <person name="Berger B."/>
            <person name="Desiere F."/>
            <person name="Vilanova D."/>
            <person name="Barretto C."/>
            <person name="Pittet A.-C."/>
            <person name="Zwahlen M.-C."/>
            <person name="Rouvet M."/>
            <person name="Altermann E."/>
            <person name="Barrangou R."/>
            <person name="Mollet B."/>
            <person name="Mercenier A."/>
            <person name="Klaenhammer T."/>
            <person name="Arigoni F."/>
            <person name="Schell M.A."/>
        </authorList>
    </citation>
    <scope>NUCLEOTIDE SEQUENCE [LARGE SCALE GENOMIC DNA]</scope>
    <source>
        <strain>CNCM I-1225 / La1 / NCC 533</strain>
    </source>
</reference>
<gene>
    <name evidence="1" type="primary">prfC</name>
    <name type="ordered locus">LJ_1600</name>
</gene>
<accession>Q74IG8</accession>
<feature type="chain" id="PRO_0000242185" description="Peptide chain release factor 3">
    <location>
        <begin position="1"/>
        <end position="522"/>
    </location>
</feature>
<feature type="domain" description="tr-type G">
    <location>
        <begin position="9"/>
        <end position="276"/>
    </location>
</feature>
<feature type="binding site" evidence="1">
    <location>
        <begin position="18"/>
        <end position="25"/>
    </location>
    <ligand>
        <name>GTP</name>
        <dbReference type="ChEBI" id="CHEBI:37565"/>
    </ligand>
</feature>
<feature type="binding site" evidence="1">
    <location>
        <begin position="86"/>
        <end position="90"/>
    </location>
    <ligand>
        <name>GTP</name>
        <dbReference type="ChEBI" id="CHEBI:37565"/>
    </ligand>
</feature>
<feature type="binding site" evidence="1">
    <location>
        <begin position="140"/>
        <end position="143"/>
    </location>
    <ligand>
        <name>GTP</name>
        <dbReference type="ChEBI" id="CHEBI:37565"/>
    </ligand>
</feature>
<comment type="function">
    <text evidence="1">Increases the formation of ribosomal termination complexes and stimulates activities of RF-1 and RF-2. It binds guanine nucleotides and has strong preference for UGA stop codons. It may interact directly with the ribosome. The stimulation of RF-1 and RF-2 is significantly reduced by GTP and GDP, but not by GMP.</text>
</comment>
<comment type="subcellular location">
    <subcellularLocation>
        <location evidence="1">Cytoplasm</location>
    </subcellularLocation>
</comment>
<comment type="similarity">
    <text evidence="1">Belongs to the TRAFAC class translation factor GTPase superfamily. Classic translation factor GTPase family. PrfC subfamily.</text>
</comment>
<dbReference type="EMBL" id="AE017198">
    <property type="protein sequence ID" value="AAS09370.1"/>
    <property type="molecule type" value="Genomic_DNA"/>
</dbReference>
<dbReference type="RefSeq" id="WP_004897753.1">
    <property type="nucleotide sequence ID" value="NC_005362.1"/>
</dbReference>
<dbReference type="SMR" id="Q74IG8"/>
<dbReference type="KEGG" id="ljo:LJ_1600"/>
<dbReference type="eggNOG" id="COG4108">
    <property type="taxonomic scope" value="Bacteria"/>
</dbReference>
<dbReference type="HOGENOM" id="CLU_002794_2_1_9"/>
<dbReference type="Proteomes" id="UP000000581">
    <property type="component" value="Chromosome"/>
</dbReference>
<dbReference type="GO" id="GO:0005829">
    <property type="term" value="C:cytosol"/>
    <property type="evidence" value="ECO:0007669"/>
    <property type="project" value="TreeGrafter"/>
</dbReference>
<dbReference type="GO" id="GO:0005525">
    <property type="term" value="F:GTP binding"/>
    <property type="evidence" value="ECO:0007669"/>
    <property type="project" value="UniProtKB-UniRule"/>
</dbReference>
<dbReference type="GO" id="GO:0003924">
    <property type="term" value="F:GTPase activity"/>
    <property type="evidence" value="ECO:0007669"/>
    <property type="project" value="InterPro"/>
</dbReference>
<dbReference type="GO" id="GO:0016150">
    <property type="term" value="F:translation release factor activity, codon nonspecific"/>
    <property type="evidence" value="ECO:0007669"/>
    <property type="project" value="TreeGrafter"/>
</dbReference>
<dbReference type="GO" id="GO:0016149">
    <property type="term" value="F:translation release factor activity, codon specific"/>
    <property type="evidence" value="ECO:0007669"/>
    <property type="project" value="UniProtKB-UniRule"/>
</dbReference>
<dbReference type="GO" id="GO:0006449">
    <property type="term" value="P:regulation of translational termination"/>
    <property type="evidence" value="ECO:0007669"/>
    <property type="project" value="UniProtKB-UniRule"/>
</dbReference>
<dbReference type="CDD" id="cd04169">
    <property type="entry name" value="RF3"/>
    <property type="match status" value="1"/>
</dbReference>
<dbReference type="CDD" id="cd16259">
    <property type="entry name" value="RF3_III"/>
    <property type="match status" value="1"/>
</dbReference>
<dbReference type="FunFam" id="3.30.70.3280:FF:000001">
    <property type="entry name" value="Peptide chain release factor 3"/>
    <property type="match status" value="1"/>
</dbReference>
<dbReference type="FunFam" id="3.40.50.300:FF:000542">
    <property type="entry name" value="Peptide chain release factor 3"/>
    <property type="match status" value="1"/>
</dbReference>
<dbReference type="Gene3D" id="3.40.50.300">
    <property type="entry name" value="P-loop containing nucleotide triphosphate hydrolases"/>
    <property type="match status" value="1"/>
</dbReference>
<dbReference type="Gene3D" id="3.30.70.3280">
    <property type="entry name" value="Peptide chain release factor 3, domain III"/>
    <property type="match status" value="1"/>
</dbReference>
<dbReference type="Gene3D" id="2.40.30.10">
    <property type="entry name" value="Translation factors"/>
    <property type="match status" value="1"/>
</dbReference>
<dbReference type="HAMAP" id="MF_00072">
    <property type="entry name" value="Rel_fac_3"/>
    <property type="match status" value="1"/>
</dbReference>
<dbReference type="InterPro" id="IPR053905">
    <property type="entry name" value="EF-G-like_DII"/>
</dbReference>
<dbReference type="InterPro" id="IPR035647">
    <property type="entry name" value="EFG_III/V"/>
</dbReference>
<dbReference type="InterPro" id="IPR031157">
    <property type="entry name" value="G_TR_CS"/>
</dbReference>
<dbReference type="InterPro" id="IPR027417">
    <property type="entry name" value="P-loop_NTPase"/>
</dbReference>
<dbReference type="InterPro" id="IPR004548">
    <property type="entry name" value="PrfC"/>
</dbReference>
<dbReference type="InterPro" id="IPR032090">
    <property type="entry name" value="RF3_C"/>
</dbReference>
<dbReference type="InterPro" id="IPR038467">
    <property type="entry name" value="RF3_dom_3_sf"/>
</dbReference>
<dbReference type="InterPro" id="IPR041732">
    <property type="entry name" value="RF3_GTP-bd"/>
</dbReference>
<dbReference type="InterPro" id="IPR005225">
    <property type="entry name" value="Small_GTP-bd"/>
</dbReference>
<dbReference type="InterPro" id="IPR000795">
    <property type="entry name" value="T_Tr_GTP-bd_dom"/>
</dbReference>
<dbReference type="InterPro" id="IPR009000">
    <property type="entry name" value="Transl_B-barrel_sf"/>
</dbReference>
<dbReference type="NCBIfam" id="TIGR00503">
    <property type="entry name" value="prfC"/>
    <property type="match status" value="1"/>
</dbReference>
<dbReference type="NCBIfam" id="NF001964">
    <property type="entry name" value="PRK00741.1"/>
    <property type="match status" value="1"/>
</dbReference>
<dbReference type="NCBIfam" id="TIGR00231">
    <property type="entry name" value="small_GTP"/>
    <property type="match status" value="1"/>
</dbReference>
<dbReference type="PANTHER" id="PTHR43556">
    <property type="entry name" value="PEPTIDE CHAIN RELEASE FACTOR RF3"/>
    <property type="match status" value="1"/>
</dbReference>
<dbReference type="PANTHER" id="PTHR43556:SF2">
    <property type="entry name" value="PEPTIDE CHAIN RELEASE FACTOR RF3"/>
    <property type="match status" value="1"/>
</dbReference>
<dbReference type="Pfam" id="PF22042">
    <property type="entry name" value="EF-G_D2"/>
    <property type="match status" value="1"/>
</dbReference>
<dbReference type="Pfam" id="PF00009">
    <property type="entry name" value="GTP_EFTU"/>
    <property type="match status" value="1"/>
</dbReference>
<dbReference type="Pfam" id="PF16658">
    <property type="entry name" value="RF3_C"/>
    <property type="match status" value="1"/>
</dbReference>
<dbReference type="PRINTS" id="PR00315">
    <property type="entry name" value="ELONGATNFCT"/>
</dbReference>
<dbReference type="SUPFAM" id="SSF54980">
    <property type="entry name" value="EF-G C-terminal domain-like"/>
    <property type="match status" value="1"/>
</dbReference>
<dbReference type="SUPFAM" id="SSF52540">
    <property type="entry name" value="P-loop containing nucleoside triphosphate hydrolases"/>
    <property type="match status" value="1"/>
</dbReference>
<dbReference type="SUPFAM" id="SSF50447">
    <property type="entry name" value="Translation proteins"/>
    <property type="match status" value="1"/>
</dbReference>
<dbReference type="PROSITE" id="PS00301">
    <property type="entry name" value="G_TR_1"/>
    <property type="match status" value="1"/>
</dbReference>
<dbReference type="PROSITE" id="PS51722">
    <property type="entry name" value="G_TR_2"/>
    <property type="match status" value="1"/>
</dbReference>
<sequence length="522" mass="58991">MTKLTDEVKKRRTFAIISHPDAGKTTITEQMLLFGGVIRSAGTVKARKSGHYATSDWMAIEKKRGISVTSSVMQFEYQGKRINILDTPGHQDFSEDTYRTLMAVDAAVMVIDSAKGIEPQTKKLFKVVKKRGIPIFTFMNKLDRDGREPLDLIAELEDLLGIEGVAMNWPIGMGKQLKGLYDIANNRVELYRKDEDDRYLPLDENGKLSEDEALAQDSLYQSTLDDIDLLKEAGNTFDKDKILRGDQTPVFFGSALTNFGVETFLDSFVNLAPAPQEHVVNEDEKLAADDPEFSGFVFKIQANMNPNHRDRIAFVRIGSGEFKKGIDVTLARTGKPVRLNNATEFMSSERVQVSDAVAGDIVGLYDTGNFQIGDSIYAGKKKIVYPELPQFTPEIFMRVTAKNVMKQKSFHKGMNQLVQEGAIQLYRGYSTDDYILGAVGQLQFEVFSFRMKNEYNSEVELHTLGNRVARWINPDQLDPKMSSSRNLLVKDRDGEPLFLFENAFAERWFKDKYPDVELTSRL</sequence>
<keyword id="KW-0963">Cytoplasm</keyword>
<keyword id="KW-0342">GTP-binding</keyword>
<keyword id="KW-0547">Nucleotide-binding</keyword>
<keyword id="KW-0648">Protein biosynthesis</keyword>
<protein>
    <recommendedName>
        <fullName evidence="1">Peptide chain release factor 3</fullName>
        <shortName evidence="1">RF-3</shortName>
    </recommendedName>
</protein>
<proteinExistence type="inferred from homology"/>
<organism>
    <name type="scientific">Lactobacillus johnsonii (strain CNCM I-12250 / La1 / NCC 533)</name>
    <dbReference type="NCBI Taxonomy" id="257314"/>
    <lineage>
        <taxon>Bacteria</taxon>
        <taxon>Bacillati</taxon>
        <taxon>Bacillota</taxon>
        <taxon>Bacilli</taxon>
        <taxon>Lactobacillales</taxon>
        <taxon>Lactobacillaceae</taxon>
        <taxon>Lactobacillus</taxon>
    </lineage>
</organism>